<proteinExistence type="evidence at protein level"/>
<gene>
    <name type="primary">OTC</name>
    <name type="ordered locus">At1g75330</name>
    <name type="ORF">F1B16.13</name>
</gene>
<organism>
    <name type="scientific">Arabidopsis thaliana</name>
    <name type="common">Mouse-ear cress</name>
    <dbReference type="NCBI Taxonomy" id="3702"/>
    <lineage>
        <taxon>Eukaryota</taxon>
        <taxon>Viridiplantae</taxon>
        <taxon>Streptophyta</taxon>
        <taxon>Embryophyta</taxon>
        <taxon>Tracheophyta</taxon>
        <taxon>Spermatophyta</taxon>
        <taxon>Magnoliopsida</taxon>
        <taxon>eudicotyledons</taxon>
        <taxon>Gunneridae</taxon>
        <taxon>Pentapetalae</taxon>
        <taxon>rosids</taxon>
        <taxon>malvids</taxon>
        <taxon>Brassicales</taxon>
        <taxon>Brassicaceae</taxon>
        <taxon>Camelineae</taxon>
        <taxon>Arabidopsis</taxon>
    </lineage>
</organism>
<keyword id="KW-0002">3D-structure</keyword>
<keyword id="KW-0007">Acetylation</keyword>
<keyword id="KW-0028">Amino-acid biosynthesis</keyword>
<keyword id="KW-0055">Arginine biosynthesis</keyword>
<keyword id="KW-0150">Chloroplast</keyword>
<keyword id="KW-0934">Plastid</keyword>
<keyword id="KW-1185">Reference proteome</keyword>
<keyword id="KW-0808">Transferase</keyword>
<keyword id="KW-0809">Transit peptide</keyword>
<evidence type="ECO:0000250" key="1">
    <source>
        <dbReference type="UniProtKB" id="P00480"/>
    </source>
</evidence>
<evidence type="ECO:0000255" key="2"/>
<evidence type="ECO:0000305" key="3"/>
<evidence type="ECO:0007744" key="4">
    <source>
    </source>
</evidence>
<evidence type="ECO:0007829" key="5">
    <source>
        <dbReference type="PDB" id="8QEU"/>
    </source>
</evidence>
<evidence type="ECO:0007829" key="6">
    <source>
        <dbReference type="PDB" id="8QEV"/>
    </source>
</evidence>
<comment type="catalytic activity">
    <reaction>
        <text>carbamoyl phosphate + L-ornithine = L-citrulline + phosphate + H(+)</text>
        <dbReference type="Rhea" id="RHEA:19513"/>
        <dbReference type="ChEBI" id="CHEBI:15378"/>
        <dbReference type="ChEBI" id="CHEBI:43474"/>
        <dbReference type="ChEBI" id="CHEBI:46911"/>
        <dbReference type="ChEBI" id="CHEBI:57743"/>
        <dbReference type="ChEBI" id="CHEBI:58228"/>
        <dbReference type="EC" id="2.1.3.3"/>
    </reaction>
</comment>
<comment type="subcellular location">
    <subcellularLocation>
        <location evidence="3">Plastid</location>
        <location evidence="3">Chloroplast</location>
    </subcellularLocation>
</comment>
<comment type="similarity">
    <text evidence="3">Belongs to the aspartate/ornithine carbamoyltransferase superfamily. OTCase family.</text>
</comment>
<sequence length="375" mass="41002">MAAAMASHVSTARSPALSFSSSSSSFFPGTTLRRFSAVSLPSPALPRLRVSCQASSVTSPSSPSDVKGKSDLKDFLAIDDFDTATIKTILDKASEVKALLKSGERNYLPFKGKSMSMIFAKPSMRTRVSFETGFFLLGGHALYLGPNDIQMGKREETRDVARVLSRYNDIIMARVFAHQDILDLANYSSVPVVNGLTDHNHPCQIMADALTMIEHIGQVEGTKVVYVGDGNNMVHSWLELASVIPFHFVCACPKGYEPDKERVSKAKQAGLSKIEITNDPKEAVIGADVVYSDVWASMGQKDEAEARRKAFQGFQVDEALMKLAGQKAYFMHCLPAERGVEVTNGVVEAPYSIVFPQAENRMHAQNAIMLHLLGF</sequence>
<protein>
    <recommendedName>
        <fullName>Ornithine transcarbamylase, chloroplastic</fullName>
        <shortName>OTCase</shortName>
        <ecNumber>2.1.3.3</ecNumber>
    </recommendedName>
    <alternativeName>
        <fullName>Ornithine carbamoyltransferase, chloroplastic</fullName>
    </alternativeName>
</protein>
<reference key="1">
    <citation type="journal article" date="1999" name="FEBS Lett.">
        <title>OTC and AUL1, two convergent and overlapping genes in the nuclear genome of Arabidopsis thaliana.</title>
        <authorList>
            <person name="Quesada V."/>
            <person name="Ponce M.R."/>
            <person name="Micol J.L."/>
        </authorList>
    </citation>
    <scope>NUCLEOTIDE SEQUENCE [GENOMIC DNA / MRNA]</scope>
    <source>
        <strain>cv. Columbia</strain>
    </source>
</reference>
<reference key="2">
    <citation type="journal article" date="2000" name="Nature">
        <title>Sequence and analysis of chromosome 1 of the plant Arabidopsis thaliana.</title>
        <authorList>
            <person name="Theologis A."/>
            <person name="Ecker J.R."/>
            <person name="Palm C.J."/>
            <person name="Federspiel N.A."/>
            <person name="Kaul S."/>
            <person name="White O."/>
            <person name="Alonso J."/>
            <person name="Altafi H."/>
            <person name="Araujo R."/>
            <person name="Bowman C.L."/>
            <person name="Brooks S.Y."/>
            <person name="Buehler E."/>
            <person name="Chan A."/>
            <person name="Chao Q."/>
            <person name="Chen H."/>
            <person name="Cheuk R.F."/>
            <person name="Chin C.W."/>
            <person name="Chung M.K."/>
            <person name="Conn L."/>
            <person name="Conway A.B."/>
            <person name="Conway A.R."/>
            <person name="Creasy T.H."/>
            <person name="Dewar K."/>
            <person name="Dunn P."/>
            <person name="Etgu P."/>
            <person name="Feldblyum T.V."/>
            <person name="Feng J.-D."/>
            <person name="Fong B."/>
            <person name="Fujii C.Y."/>
            <person name="Gill J.E."/>
            <person name="Goldsmith A.D."/>
            <person name="Haas B."/>
            <person name="Hansen N.F."/>
            <person name="Hughes B."/>
            <person name="Huizar L."/>
            <person name="Hunter J.L."/>
            <person name="Jenkins J."/>
            <person name="Johnson-Hopson C."/>
            <person name="Khan S."/>
            <person name="Khaykin E."/>
            <person name="Kim C.J."/>
            <person name="Koo H.L."/>
            <person name="Kremenetskaia I."/>
            <person name="Kurtz D.B."/>
            <person name="Kwan A."/>
            <person name="Lam B."/>
            <person name="Langin-Hooper S."/>
            <person name="Lee A."/>
            <person name="Lee J.M."/>
            <person name="Lenz C.A."/>
            <person name="Li J.H."/>
            <person name="Li Y.-P."/>
            <person name="Lin X."/>
            <person name="Liu S.X."/>
            <person name="Liu Z.A."/>
            <person name="Luros J.S."/>
            <person name="Maiti R."/>
            <person name="Marziali A."/>
            <person name="Militscher J."/>
            <person name="Miranda M."/>
            <person name="Nguyen M."/>
            <person name="Nierman W.C."/>
            <person name="Osborne B.I."/>
            <person name="Pai G."/>
            <person name="Peterson J."/>
            <person name="Pham P.K."/>
            <person name="Rizzo M."/>
            <person name="Rooney T."/>
            <person name="Rowley D."/>
            <person name="Sakano H."/>
            <person name="Salzberg S.L."/>
            <person name="Schwartz J.R."/>
            <person name="Shinn P."/>
            <person name="Southwick A.M."/>
            <person name="Sun H."/>
            <person name="Tallon L.J."/>
            <person name="Tambunga G."/>
            <person name="Toriumi M.J."/>
            <person name="Town C.D."/>
            <person name="Utterback T."/>
            <person name="Van Aken S."/>
            <person name="Vaysberg M."/>
            <person name="Vysotskaia V.S."/>
            <person name="Walker M."/>
            <person name="Wu D."/>
            <person name="Yu G."/>
            <person name="Fraser C.M."/>
            <person name="Venter J.C."/>
            <person name="Davis R.W."/>
        </authorList>
    </citation>
    <scope>NUCLEOTIDE SEQUENCE [LARGE SCALE GENOMIC DNA]</scope>
    <source>
        <strain>cv. Columbia</strain>
    </source>
</reference>
<reference key="3">
    <citation type="journal article" date="2017" name="Plant J.">
        <title>Araport11: a complete reannotation of the Arabidopsis thaliana reference genome.</title>
        <authorList>
            <person name="Cheng C.Y."/>
            <person name="Krishnakumar V."/>
            <person name="Chan A.P."/>
            <person name="Thibaud-Nissen F."/>
            <person name="Schobel S."/>
            <person name="Town C.D."/>
        </authorList>
    </citation>
    <scope>GENOME REANNOTATION</scope>
    <source>
        <strain>cv. Columbia</strain>
    </source>
</reference>
<reference key="4">
    <citation type="journal article" date="2003" name="Science">
        <title>Empirical analysis of transcriptional activity in the Arabidopsis genome.</title>
        <authorList>
            <person name="Yamada K."/>
            <person name="Lim J."/>
            <person name="Dale J.M."/>
            <person name="Chen H."/>
            <person name="Shinn P."/>
            <person name="Palm C.J."/>
            <person name="Southwick A.M."/>
            <person name="Wu H.C."/>
            <person name="Kim C.J."/>
            <person name="Nguyen M."/>
            <person name="Pham P.K."/>
            <person name="Cheuk R.F."/>
            <person name="Karlin-Newmann G."/>
            <person name="Liu S.X."/>
            <person name="Lam B."/>
            <person name="Sakano H."/>
            <person name="Wu T."/>
            <person name="Yu G."/>
            <person name="Miranda M."/>
            <person name="Quach H.L."/>
            <person name="Tripp M."/>
            <person name="Chang C.H."/>
            <person name="Lee J.M."/>
            <person name="Toriumi M.J."/>
            <person name="Chan M.M."/>
            <person name="Tang C.C."/>
            <person name="Onodera C.S."/>
            <person name="Deng J.M."/>
            <person name="Akiyama K."/>
            <person name="Ansari Y."/>
            <person name="Arakawa T."/>
            <person name="Banh J."/>
            <person name="Banno F."/>
            <person name="Bowser L."/>
            <person name="Brooks S.Y."/>
            <person name="Carninci P."/>
            <person name="Chao Q."/>
            <person name="Choy N."/>
            <person name="Enju A."/>
            <person name="Goldsmith A.D."/>
            <person name="Gurjal M."/>
            <person name="Hansen N.F."/>
            <person name="Hayashizaki Y."/>
            <person name="Johnson-Hopson C."/>
            <person name="Hsuan V.W."/>
            <person name="Iida K."/>
            <person name="Karnes M."/>
            <person name="Khan S."/>
            <person name="Koesema E."/>
            <person name="Ishida J."/>
            <person name="Jiang P.X."/>
            <person name="Jones T."/>
            <person name="Kawai J."/>
            <person name="Kamiya A."/>
            <person name="Meyers C."/>
            <person name="Nakajima M."/>
            <person name="Narusaka M."/>
            <person name="Seki M."/>
            <person name="Sakurai T."/>
            <person name="Satou M."/>
            <person name="Tamse R."/>
            <person name="Vaysberg M."/>
            <person name="Wallender E.K."/>
            <person name="Wong C."/>
            <person name="Yamamura Y."/>
            <person name="Yuan S."/>
            <person name="Shinozaki K."/>
            <person name="Davis R.W."/>
            <person name="Theologis A."/>
            <person name="Ecker J.R."/>
        </authorList>
    </citation>
    <scope>NUCLEOTIDE SEQUENCE [LARGE SCALE MRNA]</scope>
    <source>
        <strain>cv. Columbia</strain>
    </source>
</reference>
<reference key="5">
    <citation type="journal article" date="2012" name="Mol. Cell. Proteomics">
        <title>Comparative large-scale characterisation of plant vs. mammal proteins reveals similar and idiosyncratic N-alpha acetylation features.</title>
        <authorList>
            <person name="Bienvenut W.V."/>
            <person name="Sumpton D."/>
            <person name="Martinez A."/>
            <person name="Lilla S."/>
            <person name="Espagne C."/>
            <person name="Meinnel T."/>
            <person name="Giglione C."/>
        </authorList>
    </citation>
    <scope>ACETYLATION [LARGE SCALE ANALYSIS] AT ALA-54</scope>
    <scope>CLEAVAGE OF TRANSIT PEPTIDE [LARGE SCALE ANALYSIS] AFTER GLN-53</scope>
    <scope>IDENTIFICATION BY MASS SPECTROMETRY [LARGE SCALE ANALYSIS]</scope>
</reference>
<feature type="transit peptide" description="Chloroplast" evidence="2 4">
    <location>
        <begin position="1"/>
        <end position="53"/>
    </location>
</feature>
<feature type="chain" id="PRO_0000020340" description="Ornithine transcarbamylase, chloroplastic">
    <location>
        <begin position="54"/>
        <end position="375"/>
    </location>
</feature>
<feature type="active site" description="Proton acceptor" evidence="1">
    <location>
        <position position="333"/>
    </location>
</feature>
<feature type="binding site" evidence="1">
    <location>
        <begin position="123"/>
        <end position="126"/>
    </location>
    <ligand>
        <name>carbamoyl phosphate</name>
        <dbReference type="ChEBI" id="CHEBI:58228"/>
    </ligand>
</feature>
<feature type="binding site" evidence="1">
    <location>
        <position position="174"/>
    </location>
    <ligand>
        <name>carbamoyl phosphate</name>
        <dbReference type="ChEBI" id="CHEBI:58228"/>
    </ligand>
</feature>
<feature type="binding site" evidence="1">
    <location>
        <position position="201"/>
    </location>
    <ligand>
        <name>carbamoyl phosphate</name>
        <dbReference type="ChEBI" id="CHEBI:58228"/>
    </ligand>
</feature>
<feature type="binding site" evidence="1">
    <location>
        <position position="204"/>
    </location>
    <ligand>
        <name>carbamoyl phosphate</name>
        <dbReference type="ChEBI" id="CHEBI:58228"/>
    </ligand>
</feature>
<feature type="binding site" evidence="1">
    <location>
        <position position="232"/>
    </location>
    <ligand>
        <name>L-ornithine</name>
        <dbReference type="ChEBI" id="CHEBI:46911"/>
    </ligand>
</feature>
<feature type="binding site" evidence="1">
    <location>
        <position position="293"/>
    </location>
    <ligand>
        <name>L-ornithine</name>
        <dbReference type="ChEBI" id="CHEBI:46911"/>
    </ligand>
</feature>
<feature type="binding site" evidence="1">
    <location>
        <position position="297"/>
    </location>
    <ligand>
        <name>L-ornithine</name>
        <dbReference type="ChEBI" id="CHEBI:46911"/>
    </ligand>
</feature>
<feature type="binding site" evidence="1">
    <location>
        <position position="298"/>
    </location>
    <ligand>
        <name>L-ornithine</name>
        <dbReference type="ChEBI" id="CHEBI:46911"/>
    </ligand>
</feature>
<feature type="binding site" evidence="1">
    <location>
        <begin position="333"/>
        <end position="334"/>
    </location>
    <ligand>
        <name>carbamoyl phosphate</name>
        <dbReference type="ChEBI" id="CHEBI:58228"/>
    </ligand>
</feature>
<feature type="binding site" evidence="1">
    <location>
        <position position="361"/>
    </location>
    <ligand>
        <name>carbamoyl phosphate</name>
        <dbReference type="ChEBI" id="CHEBI:58228"/>
    </ligand>
</feature>
<feature type="modified residue" description="N-acetylalanine" evidence="4">
    <location>
        <position position="54"/>
    </location>
</feature>
<feature type="sequence conflict" description="In Ref. 1; CAA04115/CAA05510." evidence="3" ref="1">
    <original>R</original>
    <variation>P</variation>
    <location>
        <position position="158"/>
    </location>
</feature>
<feature type="sequence conflict" description="In Ref. 1; CAA04115/CAA05510." evidence="3" ref="1">
    <original>E</original>
    <variation>K</variation>
    <location>
        <position position="214"/>
    </location>
</feature>
<feature type="sequence conflict" description="In Ref. 1; CAA04115/CAA05510." evidence="3" ref="1">
    <original>VEGT</original>
    <variation>FERK</variation>
    <location>
        <begin position="219"/>
        <end position="222"/>
    </location>
</feature>
<feature type="sequence conflict" description="In Ref. 1; CAA04115/CAA05510." evidence="3" ref="1">
    <original>N</original>
    <variation>Y</variation>
    <location>
        <position position="366"/>
    </location>
</feature>
<feature type="strand" evidence="6">
    <location>
        <begin position="75"/>
        <end position="77"/>
    </location>
</feature>
<feature type="helix" evidence="5">
    <location>
        <begin position="78"/>
        <end position="80"/>
    </location>
</feature>
<feature type="helix" evidence="5">
    <location>
        <begin position="83"/>
        <end position="101"/>
    </location>
</feature>
<feature type="turn" evidence="5">
    <location>
        <begin position="109"/>
        <end position="112"/>
    </location>
</feature>
<feature type="strand" evidence="5">
    <location>
        <begin position="114"/>
        <end position="121"/>
    </location>
</feature>
<feature type="helix" evidence="5">
    <location>
        <begin position="125"/>
        <end position="136"/>
    </location>
</feature>
<feature type="strand" evidence="5">
    <location>
        <begin position="140"/>
        <end position="144"/>
    </location>
</feature>
<feature type="turn" evidence="5">
    <location>
        <begin position="146"/>
        <end position="148"/>
    </location>
</feature>
<feature type="turn" evidence="5">
    <location>
        <begin position="151"/>
        <end position="153"/>
    </location>
</feature>
<feature type="helix" evidence="5">
    <location>
        <begin position="157"/>
        <end position="167"/>
    </location>
</feature>
<feature type="strand" evidence="5">
    <location>
        <begin position="169"/>
        <end position="174"/>
    </location>
</feature>
<feature type="helix" evidence="5">
    <location>
        <begin position="178"/>
        <end position="187"/>
    </location>
</feature>
<feature type="strand" evidence="5">
    <location>
        <begin position="192"/>
        <end position="194"/>
    </location>
</feature>
<feature type="helix" evidence="5">
    <location>
        <begin position="202"/>
        <end position="215"/>
    </location>
</feature>
<feature type="strand" evidence="5">
    <location>
        <begin position="223"/>
        <end position="228"/>
    </location>
</feature>
<feature type="helix" evidence="5">
    <location>
        <begin position="232"/>
        <end position="241"/>
    </location>
</feature>
<feature type="strand" evidence="5">
    <location>
        <begin position="247"/>
        <end position="251"/>
    </location>
</feature>
<feature type="helix" evidence="5">
    <location>
        <begin position="260"/>
        <end position="269"/>
    </location>
</feature>
<feature type="strand" evidence="5">
    <location>
        <begin position="271"/>
        <end position="278"/>
    </location>
</feature>
<feature type="helix" evidence="5">
    <location>
        <begin position="280"/>
        <end position="283"/>
    </location>
</feature>
<feature type="turn" evidence="5">
    <location>
        <begin position="284"/>
        <end position="286"/>
    </location>
</feature>
<feature type="strand" evidence="5">
    <location>
        <begin position="288"/>
        <end position="292"/>
    </location>
</feature>
<feature type="helix" evidence="5">
    <location>
        <begin position="301"/>
        <end position="303"/>
    </location>
</feature>
<feature type="helix" evidence="5">
    <location>
        <begin position="304"/>
        <end position="310"/>
    </location>
</feature>
<feature type="turn" evidence="5">
    <location>
        <begin position="311"/>
        <end position="313"/>
    </location>
</feature>
<feature type="helix" evidence="5">
    <location>
        <begin position="318"/>
        <end position="324"/>
    </location>
</feature>
<feature type="strand" evidence="5">
    <location>
        <begin position="329"/>
        <end position="332"/>
    </location>
</feature>
<feature type="turn" evidence="5">
    <location>
        <begin position="339"/>
        <end position="341"/>
    </location>
</feature>
<feature type="helix" evidence="5">
    <location>
        <begin position="344"/>
        <end position="347"/>
    </location>
</feature>
<feature type="helix" evidence="5">
    <location>
        <begin position="354"/>
        <end position="372"/>
    </location>
</feature>
<name>OTC_ARATH</name>
<accession>O50039</accession>
<accession>Q9FWS2</accession>
<dbReference type="EC" id="2.1.3.3"/>
<dbReference type="EMBL" id="AJ000476">
    <property type="protein sequence ID" value="CAA04115.1"/>
    <property type="molecule type" value="mRNA"/>
</dbReference>
<dbReference type="EMBL" id="AJ002524">
    <property type="protein sequence ID" value="CAA05510.1"/>
    <property type="molecule type" value="Genomic_DNA"/>
</dbReference>
<dbReference type="EMBL" id="AC023754">
    <property type="protein sequence ID" value="AAG13075.1"/>
    <property type="molecule type" value="Genomic_DNA"/>
</dbReference>
<dbReference type="EMBL" id="CP002684">
    <property type="protein sequence ID" value="AEE35701.1"/>
    <property type="molecule type" value="Genomic_DNA"/>
</dbReference>
<dbReference type="EMBL" id="AF370270">
    <property type="protein sequence ID" value="AAK44085.1"/>
    <property type="molecule type" value="mRNA"/>
</dbReference>
<dbReference type="EMBL" id="AY063030">
    <property type="protein sequence ID" value="AAL34204.1"/>
    <property type="molecule type" value="mRNA"/>
</dbReference>
<dbReference type="PIR" id="G96783">
    <property type="entry name" value="G96783"/>
</dbReference>
<dbReference type="PIR" id="T51617">
    <property type="entry name" value="T51617"/>
</dbReference>
<dbReference type="RefSeq" id="NP_177667.1">
    <property type="nucleotide sequence ID" value="NM_106187.4"/>
</dbReference>
<dbReference type="PDB" id="8QEU">
    <property type="method" value="X-ray"/>
    <property type="resolution" value="1.50 A"/>
    <property type="chains" value="A/B/C=54-375"/>
</dbReference>
<dbReference type="PDB" id="8QEV">
    <property type="method" value="X-ray"/>
    <property type="resolution" value="1.55 A"/>
    <property type="chains" value="A/B/C=54-375"/>
</dbReference>
<dbReference type="PDBsum" id="8QEU"/>
<dbReference type="PDBsum" id="8QEV"/>
<dbReference type="SMR" id="O50039"/>
<dbReference type="BioGRID" id="29088">
    <property type="interactions" value="3"/>
</dbReference>
<dbReference type="FunCoup" id="O50039">
    <property type="interactions" value="1654"/>
</dbReference>
<dbReference type="STRING" id="3702.O50039"/>
<dbReference type="iPTMnet" id="O50039"/>
<dbReference type="PaxDb" id="3702-AT1G75330.1"/>
<dbReference type="ProteomicsDB" id="226041"/>
<dbReference type="EnsemblPlants" id="AT1G75330.1">
    <property type="protein sequence ID" value="AT1G75330.1"/>
    <property type="gene ID" value="AT1G75330"/>
</dbReference>
<dbReference type="GeneID" id="843869"/>
<dbReference type="Gramene" id="AT1G75330.1">
    <property type="protein sequence ID" value="AT1G75330.1"/>
    <property type="gene ID" value="AT1G75330"/>
</dbReference>
<dbReference type="KEGG" id="ath:AT1G75330"/>
<dbReference type="Araport" id="AT1G75330"/>
<dbReference type="TAIR" id="AT1G75330">
    <property type="gene designation" value="OTC"/>
</dbReference>
<dbReference type="eggNOG" id="KOG1504">
    <property type="taxonomic scope" value="Eukaryota"/>
</dbReference>
<dbReference type="HOGENOM" id="CLU_043846_3_2_1"/>
<dbReference type="InParanoid" id="O50039"/>
<dbReference type="OMA" id="DGNNVCN"/>
<dbReference type="OrthoDB" id="10252326at2759"/>
<dbReference type="PhylomeDB" id="O50039"/>
<dbReference type="BioCyc" id="MetaCyc:AT1G75330-MONOMER"/>
<dbReference type="PRO" id="PR:O50039"/>
<dbReference type="Proteomes" id="UP000006548">
    <property type="component" value="Chromosome 1"/>
</dbReference>
<dbReference type="ExpressionAtlas" id="O50039">
    <property type="expression patterns" value="baseline and differential"/>
</dbReference>
<dbReference type="GO" id="GO:0009507">
    <property type="term" value="C:chloroplast"/>
    <property type="evidence" value="ECO:0007005"/>
    <property type="project" value="TAIR"/>
</dbReference>
<dbReference type="GO" id="GO:0009570">
    <property type="term" value="C:chloroplast stroma"/>
    <property type="evidence" value="ECO:0007005"/>
    <property type="project" value="TAIR"/>
</dbReference>
<dbReference type="GO" id="GO:0016597">
    <property type="term" value="F:amino acid binding"/>
    <property type="evidence" value="ECO:0007669"/>
    <property type="project" value="InterPro"/>
</dbReference>
<dbReference type="GO" id="GO:0004585">
    <property type="term" value="F:ornithine carbamoyltransferase activity"/>
    <property type="evidence" value="ECO:0007669"/>
    <property type="project" value="UniProtKB-EC"/>
</dbReference>
<dbReference type="GO" id="GO:0006526">
    <property type="term" value="P:L-arginine biosynthetic process"/>
    <property type="evidence" value="ECO:0007669"/>
    <property type="project" value="UniProtKB-KW"/>
</dbReference>
<dbReference type="FunFam" id="3.40.50.1370:FF:000008">
    <property type="entry name" value="Ornithine carbamoyltransferase"/>
    <property type="match status" value="1"/>
</dbReference>
<dbReference type="FunFam" id="3.40.50.1370:FF:000015">
    <property type="entry name" value="ornithine carbamoyltransferase, chloroplastic"/>
    <property type="match status" value="1"/>
</dbReference>
<dbReference type="Gene3D" id="3.40.50.1370">
    <property type="entry name" value="Aspartate/ornithine carbamoyltransferase"/>
    <property type="match status" value="2"/>
</dbReference>
<dbReference type="HAMAP" id="MF_01109">
    <property type="entry name" value="OTCase"/>
    <property type="match status" value="1"/>
</dbReference>
<dbReference type="InterPro" id="IPR006132">
    <property type="entry name" value="Asp/Orn_carbamoyltranf_P-bd"/>
</dbReference>
<dbReference type="InterPro" id="IPR006130">
    <property type="entry name" value="Asp/Orn_carbamoylTrfase"/>
</dbReference>
<dbReference type="InterPro" id="IPR036901">
    <property type="entry name" value="Asp/Orn_carbamoylTrfase_sf"/>
</dbReference>
<dbReference type="InterPro" id="IPR006131">
    <property type="entry name" value="Asp_carbamoyltransf_Asp/Orn-bd"/>
</dbReference>
<dbReference type="InterPro" id="IPR002292">
    <property type="entry name" value="Orn/put_carbamltrans"/>
</dbReference>
<dbReference type="InterPro" id="IPR024904">
    <property type="entry name" value="OTCase_ArgI"/>
</dbReference>
<dbReference type="NCBIfam" id="TIGR00658">
    <property type="entry name" value="orni_carb_tr"/>
    <property type="match status" value="1"/>
</dbReference>
<dbReference type="NCBIfam" id="NF001986">
    <property type="entry name" value="PRK00779.1"/>
    <property type="match status" value="1"/>
</dbReference>
<dbReference type="PANTHER" id="PTHR45753">
    <property type="entry name" value="ORNITHINE CARBAMOYLTRANSFERASE, MITOCHONDRIAL"/>
    <property type="match status" value="1"/>
</dbReference>
<dbReference type="PANTHER" id="PTHR45753:SF3">
    <property type="entry name" value="ORNITHINE TRANSCARBAMYLASE, MITOCHONDRIAL"/>
    <property type="match status" value="1"/>
</dbReference>
<dbReference type="Pfam" id="PF00185">
    <property type="entry name" value="OTCace"/>
    <property type="match status" value="1"/>
</dbReference>
<dbReference type="Pfam" id="PF02729">
    <property type="entry name" value="OTCace_N"/>
    <property type="match status" value="1"/>
</dbReference>
<dbReference type="PRINTS" id="PR00100">
    <property type="entry name" value="AOTCASE"/>
</dbReference>
<dbReference type="PRINTS" id="PR00102">
    <property type="entry name" value="OTCASE"/>
</dbReference>
<dbReference type="SUPFAM" id="SSF53671">
    <property type="entry name" value="Aspartate/ornithine carbamoyltransferase"/>
    <property type="match status" value="1"/>
</dbReference>